<reference key="1">
    <citation type="journal article" date="1996" name="Nucleic Acids Res.">
        <title>Complete sequence analysis of the genome of the bacterium Mycoplasma pneumoniae.</title>
        <authorList>
            <person name="Himmelreich R."/>
            <person name="Hilbert H."/>
            <person name="Plagens H."/>
            <person name="Pirkl E."/>
            <person name="Li B.-C."/>
            <person name="Herrmann R."/>
        </authorList>
    </citation>
    <scope>NUCLEOTIDE SEQUENCE [LARGE SCALE GENOMIC DNA]</scope>
    <source>
        <strain>ATCC 29342 / M129 / Subtype 1</strain>
    </source>
</reference>
<protein>
    <recommendedName>
        <fullName evidence="1">DNA topoisomerase 1</fullName>
        <ecNumber evidence="1">5.6.2.1</ecNumber>
    </recommendedName>
    <alternativeName>
        <fullName evidence="1">DNA topoisomerase I</fullName>
    </alternativeName>
    <alternativeName>
        <fullName>Omega-protein</fullName>
    </alternativeName>
    <alternativeName>
        <fullName>Relaxing enzyme</fullName>
    </alternativeName>
    <alternativeName>
        <fullName>Swivelase</fullName>
    </alternativeName>
    <alternativeName>
        <fullName>Untwisting enzyme</fullName>
    </alternativeName>
</protein>
<keyword id="KW-0238">DNA-binding</keyword>
<keyword id="KW-0413">Isomerase</keyword>
<keyword id="KW-0460">Magnesium</keyword>
<keyword id="KW-0479">Metal-binding</keyword>
<keyword id="KW-1185">Reference proteome</keyword>
<keyword id="KW-0677">Repeat</keyword>
<keyword id="KW-0799">Topoisomerase</keyword>
<keyword id="KW-0862">Zinc</keyword>
<keyword id="KW-0863">Zinc-finger</keyword>
<sequence length="711" mass="81965">MSKNLVVIESPNKVKTLQKYLPNDFEIVSTIGHIREMVHKNFGFNEADYSPVWEDWTKSKKKFSSLSFKGNLKGKKLLSKYDIIKSIKEKASKATNIYLATDPDREGEAISWHVYDVLDEKDKSKCQRITFNEITKNAVLDALKNPREIDQSWVQSQFARQILDRMIGFRLSRLLNNYLSAKSAGRVQSVALRFLEEREQEIRSFVPRFWWTLDVLLNPKAEGVREACANRSIPIVLREINPALRAGLKFEEEKSVSGIDFLDEASAKKFGEQLKGVFEVYNIDETKHYSSSPNSAYTTASLQKDAINKLGWSSKKVTLIAQHLYEGVSINGEQTALISYPRTDSTRLSAQFQQSCKEYILNHYGEKYLSNRIVSAKGKKGEKIIQDAHEAIHPTDINITPEMVKNAIKKDEFLLYRLIWIRTVASLMADCKKSHTHIRFINDGNKFYASSKSLVFDGYRKIYEHFENKESNDLYIDLDKIRVGDRFMAKDIKITARQTHPAARYTQASLIEALEKSNIGRPSTYNTMASVNLDRGYASLNKHAFHVTQLGEQVNEELSKHFGKIINKEFTKNMEKSLDEIAENKKNYQEFLRDFWSNFKEEVKLAEGSIQRVKKEKEFVGRDCPSCASPLLYRYTKRGNEKFVGCSNFPNCKYNEFSQNKPNLTLEKLEELCPECNSQLVKRRTKFNPNKTFVGCSNFPRCRYIKKDNAS</sequence>
<name>TOP1_MYCPN</name>
<comment type="function">
    <text evidence="1">Releases the supercoiling and torsional tension of DNA, which is introduced during the DNA replication and transcription, by transiently cleaving and rejoining one strand of the DNA duplex. Introduces a single-strand break via transesterification at a target site in duplex DNA. The scissile phosphodiester is attacked by the catalytic tyrosine of the enzyme, resulting in the formation of a DNA-(5'-phosphotyrosyl)-enzyme intermediate and the expulsion of a 3'-OH DNA strand. The free DNA strand then undergoes passage around the unbroken strand, thus removing DNA supercoils. Finally, in the religation step, the DNA 3'-OH attacks the covalent intermediate to expel the active-site tyrosine and restore the DNA phosphodiester backbone.</text>
</comment>
<comment type="catalytic activity">
    <reaction evidence="1">
        <text>ATP-independent breakage of single-stranded DNA, followed by passage and rejoining.</text>
        <dbReference type="EC" id="5.6.2.1"/>
    </reaction>
</comment>
<comment type="cofactor">
    <cofactor evidence="1">
        <name>Mg(2+)</name>
        <dbReference type="ChEBI" id="CHEBI:18420"/>
    </cofactor>
</comment>
<comment type="subunit">
    <text evidence="1">Monomer.</text>
</comment>
<comment type="similarity">
    <text evidence="1">Belongs to the type IA topoisomerase family.</text>
</comment>
<proteinExistence type="inferred from homology"/>
<dbReference type="EC" id="5.6.2.1" evidence="1"/>
<dbReference type="EMBL" id="U00089">
    <property type="protein sequence ID" value="AAB96220.1"/>
    <property type="molecule type" value="Genomic_DNA"/>
</dbReference>
<dbReference type="PIR" id="S73898">
    <property type="entry name" value="S73898"/>
</dbReference>
<dbReference type="RefSeq" id="NP_109949.1">
    <property type="nucleotide sequence ID" value="NC_000912.1"/>
</dbReference>
<dbReference type="RefSeq" id="WP_010874618.1">
    <property type="nucleotide sequence ID" value="NZ_OU342337.1"/>
</dbReference>
<dbReference type="SMR" id="P78032"/>
<dbReference type="IntAct" id="P78032">
    <property type="interactions" value="4"/>
</dbReference>
<dbReference type="STRING" id="272634.MPN_261"/>
<dbReference type="EnsemblBacteria" id="AAB96220">
    <property type="protein sequence ID" value="AAB96220"/>
    <property type="gene ID" value="MPN_261"/>
</dbReference>
<dbReference type="KEGG" id="mpn:MPN_261"/>
<dbReference type="PATRIC" id="fig|272634.6.peg.280"/>
<dbReference type="HOGENOM" id="CLU_002929_4_3_14"/>
<dbReference type="OrthoDB" id="9804262at2"/>
<dbReference type="BioCyc" id="MPNE272634:G1GJ3-410-MONOMER"/>
<dbReference type="Proteomes" id="UP000000808">
    <property type="component" value="Chromosome"/>
</dbReference>
<dbReference type="GO" id="GO:0005694">
    <property type="term" value="C:chromosome"/>
    <property type="evidence" value="ECO:0007669"/>
    <property type="project" value="InterPro"/>
</dbReference>
<dbReference type="GO" id="GO:0003677">
    <property type="term" value="F:DNA binding"/>
    <property type="evidence" value="ECO:0007669"/>
    <property type="project" value="UniProtKB-KW"/>
</dbReference>
<dbReference type="GO" id="GO:0003917">
    <property type="term" value="F:DNA topoisomerase type I (single strand cut, ATP-independent) activity"/>
    <property type="evidence" value="ECO:0007669"/>
    <property type="project" value="UniProtKB-UniRule"/>
</dbReference>
<dbReference type="GO" id="GO:0008270">
    <property type="term" value="F:zinc ion binding"/>
    <property type="evidence" value="ECO:0007669"/>
    <property type="project" value="UniProtKB-KW"/>
</dbReference>
<dbReference type="GO" id="GO:0006265">
    <property type="term" value="P:DNA topological change"/>
    <property type="evidence" value="ECO:0007669"/>
    <property type="project" value="UniProtKB-UniRule"/>
</dbReference>
<dbReference type="CDD" id="cd00186">
    <property type="entry name" value="TOP1Ac"/>
    <property type="match status" value="1"/>
</dbReference>
<dbReference type="CDD" id="cd03363">
    <property type="entry name" value="TOPRIM_TopoIA_TopoI"/>
    <property type="match status" value="1"/>
</dbReference>
<dbReference type="Gene3D" id="3.40.50.140">
    <property type="match status" value="1"/>
</dbReference>
<dbReference type="Gene3D" id="3.30.65.10">
    <property type="entry name" value="Bacterial Topoisomerase I, domain 1"/>
    <property type="match status" value="2"/>
</dbReference>
<dbReference type="Gene3D" id="1.10.460.10">
    <property type="entry name" value="Topoisomerase I, domain 2"/>
    <property type="match status" value="1"/>
</dbReference>
<dbReference type="Gene3D" id="2.70.20.10">
    <property type="entry name" value="Topoisomerase I, domain 3"/>
    <property type="match status" value="1"/>
</dbReference>
<dbReference type="Gene3D" id="1.10.290.10">
    <property type="entry name" value="Topoisomerase I, domain 4"/>
    <property type="match status" value="1"/>
</dbReference>
<dbReference type="HAMAP" id="MF_00952">
    <property type="entry name" value="Topoisom_1_prok"/>
    <property type="match status" value="1"/>
</dbReference>
<dbReference type="InterPro" id="IPR000380">
    <property type="entry name" value="Topo_IA"/>
</dbReference>
<dbReference type="InterPro" id="IPR003601">
    <property type="entry name" value="Topo_IA_2"/>
</dbReference>
<dbReference type="InterPro" id="IPR023406">
    <property type="entry name" value="Topo_IA_AS"/>
</dbReference>
<dbReference type="InterPro" id="IPR013497">
    <property type="entry name" value="Topo_IA_cen"/>
</dbReference>
<dbReference type="InterPro" id="IPR013824">
    <property type="entry name" value="Topo_IA_cen_sub1"/>
</dbReference>
<dbReference type="InterPro" id="IPR013825">
    <property type="entry name" value="Topo_IA_cen_sub2"/>
</dbReference>
<dbReference type="InterPro" id="IPR013826">
    <property type="entry name" value="Topo_IA_cen_sub3"/>
</dbReference>
<dbReference type="InterPro" id="IPR023405">
    <property type="entry name" value="Topo_IA_core_domain"/>
</dbReference>
<dbReference type="InterPro" id="IPR003602">
    <property type="entry name" value="Topo_IA_DNA-bd_dom"/>
</dbReference>
<dbReference type="InterPro" id="IPR013498">
    <property type="entry name" value="Topo_IA_Znf"/>
</dbReference>
<dbReference type="InterPro" id="IPR005733">
    <property type="entry name" value="TopoI_bac-type"/>
</dbReference>
<dbReference type="InterPro" id="IPR028612">
    <property type="entry name" value="Topoisom_1_IA"/>
</dbReference>
<dbReference type="InterPro" id="IPR006171">
    <property type="entry name" value="TOPRIM_dom"/>
</dbReference>
<dbReference type="InterPro" id="IPR034149">
    <property type="entry name" value="TOPRIM_TopoI"/>
</dbReference>
<dbReference type="NCBIfam" id="TIGR01051">
    <property type="entry name" value="topA_bact"/>
    <property type="match status" value="1"/>
</dbReference>
<dbReference type="PANTHER" id="PTHR42785:SF1">
    <property type="entry name" value="DNA TOPOISOMERASE"/>
    <property type="match status" value="1"/>
</dbReference>
<dbReference type="PANTHER" id="PTHR42785">
    <property type="entry name" value="DNA TOPOISOMERASE, TYPE IA, CORE"/>
    <property type="match status" value="1"/>
</dbReference>
<dbReference type="Pfam" id="PF01131">
    <property type="entry name" value="Topoisom_bac"/>
    <property type="match status" value="1"/>
</dbReference>
<dbReference type="Pfam" id="PF01751">
    <property type="entry name" value="Toprim"/>
    <property type="match status" value="1"/>
</dbReference>
<dbReference type="Pfam" id="PF01396">
    <property type="entry name" value="Zn_ribbon_Top1"/>
    <property type="match status" value="2"/>
</dbReference>
<dbReference type="PRINTS" id="PR00417">
    <property type="entry name" value="PRTPISMRASEI"/>
</dbReference>
<dbReference type="SMART" id="SM00437">
    <property type="entry name" value="TOP1Ac"/>
    <property type="match status" value="1"/>
</dbReference>
<dbReference type="SMART" id="SM00436">
    <property type="entry name" value="TOP1Bc"/>
    <property type="match status" value="1"/>
</dbReference>
<dbReference type="SMART" id="SM00493">
    <property type="entry name" value="TOPRIM"/>
    <property type="match status" value="1"/>
</dbReference>
<dbReference type="SUPFAM" id="SSF56712">
    <property type="entry name" value="Prokaryotic type I DNA topoisomerase"/>
    <property type="match status" value="1"/>
</dbReference>
<dbReference type="SUPFAM" id="SSF57783">
    <property type="entry name" value="Zinc beta-ribbon"/>
    <property type="match status" value="2"/>
</dbReference>
<dbReference type="PROSITE" id="PS00396">
    <property type="entry name" value="TOPO_IA_1"/>
    <property type="match status" value="1"/>
</dbReference>
<dbReference type="PROSITE" id="PS52039">
    <property type="entry name" value="TOPO_IA_2"/>
    <property type="match status" value="1"/>
</dbReference>
<dbReference type="PROSITE" id="PS50880">
    <property type="entry name" value="TOPRIM"/>
    <property type="match status" value="1"/>
</dbReference>
<organism>
    <name type="scientific">Mycoplasma pneumoniae (strain ATCC 29342 / M129 / Subtype 1)</name>
    <name type="common">Mycoplasmoides pneumoniae</name>
    <dbReference type="NCBI Taxonomy" id="272634"/>
    <lineage>
        <taxon>Bacteria</taxon>
        <taxon>Bacillati</taxon>
        <taxon>Mycoplasmatota</taxon>
        <taxon>Mycoplasmoidales</taxon>
        <taxon>Mycoplasmoidaceae</taxon>
        <taxon>Mycoplasmoides</taxon>
    </lineage>
</organism>
<gene>
    <name evidence="1" type="primary">topA</name>
    <name type="ordered locus">MPN_261</name>
    <name type="ORF">MP572</name>
</gene>
<accession>P78032</accession>
<feature type="chain" id="PRO_0000145156" description="DNA topoisomerase 1">
    <location>
        <begin position="1"/>
        <end position="711"/>
    </location>
</feature>
<feature type="domain" description="Toprim" evidence="1">
    <location>
        <begin position="3"/>
        <end position="134"/>
    </location>
</feature>
<feature type="domain" description="Topo IA-type catalytic" evidence="2">
    <location>
        <begin position="150"/>
        <end position="604"/>
    </location>
</feature>
<feature type="zinc finger region" description="C4-type 1">
    <location>
        <begin position="624"/>
        <end position="652"/>
    </location>
</feature>
<feature type="zinc finger region" description="C4-type 2">
    <location>
        <begin position="673"/>
        <end position="702"/>
    </location>
</feature>
<feature type="region of interest" description="Interaction with DNA" evidence="1">
    <location>
        <begin position="183"/>
        <end position="188"/>
    </location>
</feature>
<feature type="active site" description="O-(5'-phospho-DNA)-tyrosine intermediate" evidence="2">
    <location>
        <position position="340"/>
    </location>
</feature>
<feature type="binding site" evidence="1">
    <location>
        <position position="9"/>
    </location>
    <ligand>
        <name>Mg(2+)</name>
        <dbReference type="ChEBI" id="CHEBI:18420"/>
        <note>catalytic</note>
    </ligand>
</feature>
<feature type="binding site" evidence="1">
    <location>
        <position position="102"/>
    </location>
    <ligand>
        <name>Mg(2+)</name>
        <dbReference type="ChEBI" id="CHEBI:18420"/>
        <note>catalytic</note>
    </ligand>
</feature>
<feature type="site" description="Interaction with DNA" evidence="1">
    <location>
        <position position="33"/>
    </location>
</feature>
<feature type="site" description="Interaction with DNA" evidence="1">
    <location>
        <position position="160"/>
    </location>
</feature>
<feature type="site" description="Interaction with DNA" evidence="1">
    <location>
        <position position="164"/>
    </location>
</feature>
<feature type="site" description="Interaction with DNA" evidence="1">
    <location>
        <position position="342"/>
    </location>
</feature>
<feature type="site" description="Interaction with DNA" evidence="1">
    <location>
        <position position="535"/>
    </location>
</feature>
<evidence type="ECO:0000255" key="1">
    <source>
        <dbReference type="HAMAP-Rule" id="MF_00952"/>
    </source>
</evidence>
<evidence type="ECO:0000255" key="2">
    <source>
        <dbReference type="PROSITE-ProRule" id="PRU01383"/>
    </source>
</evidence>